<dbReference type="EC" id="3.1.-.-" evidence="1"/>
<dbReference type="EMBL" id="CU928164">
    <property type="protein sequence ID" value="CAR19484.1"/>
    <property type="molecule type" value="Genomic_DNA"/>
</dbReference>
<dbReference type="RefSeq" id="YP_002409288.1">
    <property type="nucleotide sequence ID" value="NC_011750.1"/>
</dbReference>
<dbReference type="SMR" id="B7NI12"/>
<dbReference type="STRING" id="585057.ECIAI39_3367"/>
<dbReference type="KEGG" id="ect:ECIAI39_3367"/>
<dbReference type="PATRIC" id="fig|585057.6.peg.3495"/>
<dbReference type="HOGENOM" id="CLU_098240_3_0_6"/>
<dbReference type="Proteomes" id="UP000000749">
    <property type="component" value="Chromosome"/>
</dbReference>
<dbReference type="GO" id="GO:0005829">
    <property type="term" value="C:cytosol"/>
    <property type="evidence" value="ECO:0007669"/>
    <property type="project" value="TreeGrafter"/>
</dbReference>
<dbReference type="GO" id="GO:0004518">
    <property type="term" value="F:nuclease activity"/>
    <property type="evidence" value="ECO:0007669"/>
    <property type="project" value="UniProtKB-KW"/>
</dbReference>
<dbReference type="GO" id="GO:0000967">
    <property type="term" value="P:rRNA 5'-end processing"/>
    <property type="evidence" value="ECO:0007669"/>
    <property type="project" value="UniProtKB-UniRule"/>
</dbReference>
<dbReference type="CDD" id="cd16964">
    <property type="entry name" value="YqgF"/>
    <property type="match status" value="1"/>
</dbReference>
<dbReference type="FunFam" id="3.30.420.140:FF:000002">
    <property type="entry name" value="Putative pre-16S rRNA nuclease"/>
    <property type="match status" value="1"/>
</dbReference>
<dbReference type="Gene3D" id="3.30.420.140">
    <property type="entry name" value="YqgF/RNase H-like domain"/>
    <property type="match status" value="1"/>
</dbReference>
<dbReference type="HAMAP" id="MF_00651">
    <property type="entry name" value="Nuclease_YqgF"/>
    <property type="match status" value="1"/>
</dbReference>
<dbReference type="InterPro" id="IPR012337">
    <property type="entry name" value="RNaseH-like_sf"/>
</dbReference>
<dbReference type="InterPro" id="IPR005227">
    <property type="entry name" value="YqgF"/>
</dbReference>
<dbReference type="InterPro" id="IPR006641">
    <property type="entry name" value="YqgF/RNaseH-like_dom"/>
</dbReference>
<dbReference type="InterPro" id="IPR037027">
    <property type="entry name" value="YqgF/RNaseH-like_dom_sf"/>
</dbReference>
<dbReference type="NCBIfam" id="TIGR00250">
    <property type="entry name" value="RNAse_H_YqgF"/>
    <property type="match status" value="1"/>
</dbReference>
<dbReference type="PANTHER" id="PTHR33317">
    <property type="entry name" value="POLYNUCLEOTIDYL TRANSFERASE, RIBONUCLEASE H-LIKE SUPERFAMILY PROTEIN"/>
    <property type="match status" value="1"/>
</dbReference>
<dbReference type="PANTHER" id="PTHR33317:SF4">
    <property type="entry name" value="POLYNUCLEOTIDYL TRANSFERASE, RIBONUCLEASE H-LIKE SUPERFAMILY PROTEIN"/>
    <property type="match status" value="1"/>
</dbReference>
<dbReference type="Pfam" id="PF03652">
    <property type="entry name" value="RuvX"/>
    <property type="match status" value="1"/>
</dbReference>
<dbReference type="SMART" id="SM00732">
    <property type="entry name" value="YqgFc"/>
    <property type="match status" value="1"/>
</dbReference>
<dbReference type="SUPFAM" id="SSF53098">
    <property type="entry name" value="Ribonuclease H-like"/>
    <property type="match status" value="1"/>
</dbReference>
<organism>
    <name type="scientific">Escherichia coli O7:K1 (strain IAI39 / ExPEC)</name>
    <dbReference type="NCBI Taxonomy" id="585057"/>
    <lineage>
        <taxon>Bacteria</taxon>
        <taxon>Pseudomonadati</taxon>
        <taxon>Pseudomonadota</taxon>
        <taxon>Gammaproteobacteria</taxon>
        <taxon>Enterobacterales</taxon>
        <taxon>Enterobacteriaceae</taxon>
        <taxon>Escherichia</taxon>
    </lineage>
</organism>
<comment type="function">
    <text evidence="1">Could be a nuclease involved in processing of the 5'-end of pre-16S rRNA.</text>
</comment>
<comment type="subcellular location">
    <subcellularLocation>
        <location evidence="1">Cytoplasm</location>
    </subcellularLocation>
</comment>
<comment type="similarity">
    <text evidence="1">Belongs to the YqgF nuclease family.</text>
</comment>
<evidence type="ECO:0000255" key="1">
    <source>
        <dbReference type="HAMAP-Rule" id="MF_00651"/>
    </source>
</evidence>
<protein>
    <recommendedName>
        <fullName evidence="1">Putative pre-16S rRNA nuclease</fullName>
        <ecNumber evidence="1">3.1.-.-</ecNumber>
    </recommendedName>
</protein>
<accession>B7NI12</accession>
<gene>
    <name evidence="1" type="primary">yqgF</name>
    <name type="ordered locus">ECIAI39_3367</name>
</gene>
<keyword id="KW-0963">Cytoplasm</keyword>
<keyword id="KW-0378">Hydrolase</keyword>
<keyword id="KW-0540">Nuclease</keyword>
<keyword id="KW-0690">Ribosome biogenesis</keyword>
<name>YQGF_ECO7I</name>
<reference key="1">
    <citation type="journal article" date="2009" name="PLoS Genet.">
        <title>Organised genome dynamics in the Escherichia coli species results in highly diverse adaptive paths.</title>
        <authorList>
            <person name="Touchon M."/>
            <person name="Hoede C."/>
            <person name="Tenaillon O."/>
            <person name="Barbe V."/>
            <person name="Baeriswyl S."/>
            <person name="Bidet P."/>
            <person name="Bingen E."/>
            <person name="Bonacorsi S."/>
            <person name="Bouchier C."/>
            <person name="Bouvet O."/>
            <person name="Calteau A."/>
            <person name="Chiapello H."/>
            <person name="Clermont O."/>
            <person name="Cruveiller S."/>
            <person name="Danchin A."/>
            <person name="Diard M."/>
            <person name="Dossat C."/>
            <person name="Karoui M.E."/>
            <person name="Frapy E."/>
            <person name="Garry L."/>
            <person name="Ghigo J.M."/>
            <person name="Gilles A.M."/>
            <person name="Johnson J."/>
            <person name="Le Bouguenec C."/>
            <person name="Lescat M."/>
            <person name="Mangenot S."/>
            <person name="Martinez-Jehanne V."/>
            <person name="Matic I."/>
            <person name="Nassif X."/>
            <person name="Oztas S."/>
            <person name="Petit M.A."/>
            <person name="Pichon C."/>
            <person name="Rouy Z."/>
            <person name="Ruf C.S."/>
            <person name="Schneider D."/>
            <person name="Tourret J."/>
            <person name="Vacherie B."/>
            <person name="Vallenet D."/>
            <person name="Medigue C."/>
            <person name="Rocha E.P.C."/>
            <person name="Denamur E."/>
        </authorList>
    </citation>
    <scope>NUCLEOTIDE SEQUENCE [LARGE SCALE GENOMIC DNA]</scope>
    <source>
        <strain>IAI39 / ExPEC</strain>
    </source>
</reference>
<sequence length="138" mass="15200">MSGTLLAFDFGTKSIGVAVGQRITGTARPLPAIKAQDGTPDWNLIERLLKEWQPDEIIVGLPLNMDGTEQPLTARARKFANRIHGRFGIEVKLHDERLSTVEARSGLFEQGGYRALNKGKVDSASAVIILESYFEQGY</sequence>
<feature type="chain" id="PRO_1000131029" description="Putative pre-16S rRNA nuclease">
    <location>
        <begin position="1"/>
        <end position="138"/>
    </location>
</feature>
<proteinExistence type="inferred from homology"/>